<comment type="function">
    <text evidence="1">Catalyzes the attachment of L-aspartate to tRNA(Asp) in a two-step reaction: L-aspartate is first activated by ATP to form Asp-AMP and then transferred to the acceptor end of tRNA(Asp).</text>
</comment>
<comment type="catalytic activity">
    <reaction evidence="1">
        <text>tRNA(Asp) + L-aspartate + ATP = L-aspartyl-tRNA(Asp) + AMP + diphosphate</text>
        <dbReference type="Rhea" id="RHEA:19649"/>
        <dbReference type="Rhea" id="RHEA-COMP:9660"/>
        <dbReference type="Rhea" id="RHEA-COMP:9678"/>
        <dbReference type="ChEBI" id="CHEBI:29991"/>
        <dbReference type="ChEBI" id="CHEBI:30616"/>
        <dbReference type="ChEBI" id="CHEBI:33019"/>
        <dbReference type="ChEBI" id="CHEBI:78442"/>
        <dbReference type="ChEBI" id="CHEBI:78516"/>
        <dbReference type="ChEBI" id="CHEBI:456215"/>
        <dbReference type="EC" id="6.1.1.12"/>
    </reaction>
</comment>
<comment type="subunit">
    <text evidence="1">Homodimer.</text>
</comment>
<comment type="subcellular location">
    <subcellularLocation>
        <location evidence="1">Cytoplasm</location>
    </subcellularLocation>
</comment>
<comment type="similarity">
    <text evidence="1">Belongs to the class-II aminoacyl-tRNA synthetase family. Type 1 subfamily.</text>
</comment>
<comment type="sequence caution" evidence="3">
    <conflict type="erroneous initiation">
        <sequence resource="EMBL-CDS" id="AAS09157"/>
    </conflict>
    <text>Extended N-terminus.</text>
</comment>
<evidence type="ECO:0000255" key="1">
    <source>
        <dbReference type="HAMAP-Rule" id="MF_00044"/>
    </source>
</evidence>
<evidence type="ECO:0000256" key="2">
    <source>
        <dbReference type="SAM" id="MobiDB-lite"/>
    </source>
</evidence>
<evidence type="ECO:0000305" key="3"/>
<organism>
    <name type="scientific">Lactobacillus johnsonii (strain CNCM I-12250 / La1 / NCC 533)</name>
    <dbReference type="NCBI Taxonomy" id="257314"/>
    <lineage>
        <taxon>Bacteria</taxon>
        <taxon>Bacillati</taxon>
        <taxon>Bacillota</taxon>
        <taxon>Bacilli</taxon>
        <taxon>Lactobacillales</taxon>
        <taxon>Lactobacillaceae</taxon>
        <taxon>Lactobacillus</taxon>
    </lineage>
</organism>
<proteinExistence type="inferred from homology"/>
<sequence length="614" mass="70102">MDKRTDYAGNITSKYEGQEVTLYGWVQRVRNLGNLVFIDLRDREGIVQVVVNKDSGEKLMEIADSLNNEDVIEVKGKVVKRSSVNPEMKTGEVEVDATEIDVLNKSKVPPFEIKDDINAAEQTRLKYRYLDLRRPTLQRAIILRSKILKAVHEYFDEQGFIDIETPILGKSSPEGARDYLVPSRIYPGSFYALPQSPQLFKQLLMGAGFDKYYQLARCFRDEDLRGDRQPEFTQIDMETSFLDEQGVQDYTEGLLKKIMKDVMNIDLKTPIKRITWDEAMNKYGSDKPDTRYEMYLHDLSPIFKDSDFKVFSGAIADGGVVKGIAVKNGAKEYSRKKIEEKQDYIKRYNAKGLAWVKYEDGEFSGPIARFLTDENKEALKKEFDLEGGELIVIVADKWKVVTDSLDHLRREFAHETGIIPEGVFDFVWVVDWPLFEYDEGLGRWIAAHHPFTMPDDEGIKLLDTDPHKAHARSYDIVMNGDEMGGGSIRIHKRSIQEKMFKALGFTKKRAYEQFGYLMDALDMGFPPHAGLAIGLDRLAMMLAGKDNIRDVTAFPKNASASEPMMHAPAPVADQQLADIGIEVEKQYEDSVKETEQRLEKEAQEDADKNSTWDE</sequence>
<accession>Q74IX4</accession>
<protein>
    <recommendedName>
        <fullName evidence="1">Aspartate--tRNA ligase</fullName>
        <ecNumber evidence="1">6.1.1.12</ecNumber>
    </recommendedName>
    <alternativeName>
        <fullName evidence="1">Aspartyl-tRNA synthetase</fullName>
        <shortName evidence="1">AspRS</shortName>
    </alternativeName>
</protein>
<reference key="1">
    <citation type="journal article" date="2004" name="Proc. Natl. Acad. Sci. U.S.A.">
        <title>The genome sequence of the probiotic intestinal bacterium Lactobacillus johnsonii NCC 533.</title>
        <authorList>
            <person name="Pridmore R.D."/>
            <person name="Berger B."/>
            <person name="Desiere F."/>
            <person name="Vilanova D."/>
            <person name="Barretto C."/>
            <person name="Pittet A.-C."/>
            <person name="Zwahlen M.-C."/>
            <person name="Rouvet M."/>
            <person name="Altermann E."/>
            <person name="Barrangou R."/>
            <person name="Mollet B."/>
            <person name="Mercenier A."/>
            <person name="Klaenhammer T."/>
            <person name="Arigoni F."/>
            <person name="Schell M.A."/>
        </authorList>
    </citation>
    <scope>NUCLEOTIDE SEQUENCE [LARGE SCALE GENOMIC DNA]</scope>
    <source>
        <strain>CNCM I-1225 / La1 / NCC 533</strain>
    </source>
</reference>
<keyword id="KW-0030">Aminoacyl-tRNA synthetase</keyword>
<keyword id="KW-0067">ATP-binding</keyword>
<keyword id="KW-0963">Cytoplasm</keyword>
<keyword id="KW-0436">Ligase</keyword>
<keyword id="KW-0547">Nucleotide-binding</keyword>
<keyword id="KW-0648">Protein biosynthesis</keyword>
<feature type="chain" id="PRO_0000110886" description="Aspartate--tRNA ligase">
    <location>
        <begin position="1"/>
        <end position="614"/>
    </location>
</feature>
<feature type="region of interest" description="Aspartate" evidence="1">
    <location>
        <begin position="198"/>
        <end position="201"/>
    </location>
</feature>
<feature type="region of interest" description="Disordered" evidence="2">
    <location>
        <begin position="587"/>
        <end position="614"/>
    </location>
</feature>
<feature type="binding site" evidence="1">
    <location>
        <position position="174"/>
    </location>
    <ligand>
        <name>L-aspartate</name>
        <dbReference type="ChEBI" id="CHEBI:29991"/>
    </ligand>
</feature>
<feature type="binding site" evidence="1">
    <location>
        <begin position="220"/>
        <end position="222"/>
    </location>
    <ligand>
        <name>ATP</name>
        <dbReference type="ChEBI" id="CHEBI:30616"/>
    </ligand>
</feature>
<feature type="binding site" evidence="1">
    <location>
        <position position="220"/>
    </location>
    <ligand>
        <name>L-aspartate</name>
        <dbReference type="ChEBI" id="CHEBI:29991"/>
    </ligand>
</feature>
<feature type="binding site" evidence="1">
    <location>
        <position position="229"/>
    </location>
    <ligand>
        <name>ATP</name>
        <dbReference type="ChEBI" id="CHEBI:30616"/>
    </ligand>
</feature>
<feature type="binding site" evidence="1">
    <location>
        <position position="448"/>
    </location>
    <ligand>
        <name>L-aspartate</name>
        <dbReference type="ChEBI" id="CHEBI:29991"/>
    </ligand>
</feature>
<feature type="binding site" evidence="1">
    <location>
        <position position="482"/>
    </location>
    <ligand>
        <name>ATP</name>
        <dbReference type="ChEBI" id="CHEBI:30616"/>
    </ligand>
</feature>
<feature type="binding site" evidence="1">
    <location>
        <position position="489"/>
    </location>
    <ligand>
        <name>L-aspartate</name>
        <dbReference type="ChEBI" id="CHEBI:29991"/>
    </ligand>
</feature>
<feature type="binding site" evidence="1">
    <location>
        <begin position="534"/>
        <end position="537"/>
    </location>
    <ligand>
        <name>ATP</name>
        <dbReference type="ChEBI" id="CHEBI:30616"/>
    </ligand>
</feature>
<dbReference type="EC" id="6.1.1.12" evidence="1"/>
<dbReference type="EMBL" id="AE017198">
    <property type="protein sequence ID" value="AAS09157.1"/>
    <property type="status" value="ALT_INIT"/>
    <property type="molecule type" value="Genomic_DNA"/>
</dbReference>
<dbReference type="RefSeq" id="WP_011162151.1">
    <property type="nucleotide sequence ID" value="NC_005362.1"/>
</dbReference>
<dbReference type="SMR" id="Q74IX4"/>
<dbReference type="KEGG" id="ljo:LJ_1391"/>
<dbReference type="eggNOG" id="COG0173">
    <property type="taxonomic scope" value="Bacteria"/>
</dbReference>
<dbReference type="HOGENOM" id="CLU_014330_3_2_9"/>
<dbReference type="Proteomes" id="UP000000581">
    <property type="component" value="Chromosome"/>
</dbReference>
<dbReference type="GO" id="GO:0005737">
    <property type="term" value="C:cytoplasm"/>
    <property type="evidence" value="ECO:0007669"/>
    <property type="project" value="UniProtKB-SubCell"/>
</dbReference>
<dbReference type="GO" id="GO:0004815">
    <property type="term" value="F:aspartate-tRNA ligase activity"/>
    <property type="evidence" value="ECO:0007669"/>
    <property type="project" value="UniProtKB-UniRule"/>
</dbReference>
<dbReference type="GO" id="GO:0005524">
    <property type="term" value="F:ATP binding"/>
    <property type="evidence" value="ECO:0007669"/>
    <property type="project" value="UniProtKB-UniRule"/>
</dbReference>
<dbReference type="GO" id="GO:0140096">
    <property type="term" value="F:catalytic activity, acting on a protein"/>
    <property type="evidence" value="ECO:0007669"/>
    <property type="project" value="UniProtKB-ARBA"/>
</dbReference>
<dbReference type="GO" id="GO:0003676">
    <property type="term" value="F:nucleic acid binding"/>
    <property type="evidence" value="ECO:0007669"/>
    <property type="project" value="InterPro"/>
</dbReference>
<dbReference type="GO" id="GO:0016740">
    <property type="term" value="F:transferase activity"/>
    <property type="evidence" value="ECO:0007669"/>
    <property type="project" value="UniProtKB-ARBA"/>
</dbReference>
<dbReference type="GO" id="GO:0006422">
    <property type="term" value="P:aspartyl-tRNA aminoacylation"/>
    <property type="evidence" value="ECO:0007669"/>
    <property type="project" value="UniProtKB-UniRule"/>
</dbReference>
<dbReference type="CDD" id="cd00777">
    <property type="entry name" value="AspRS_core"/>
    <property type="match status" value="1"/>
</dbReference>
<dbReference type="CDD" id="cd04317">
    <property type="entry name" value="EcAspRS_like_N"/>
    <property type="match status" value="1"/>
</dbReference>
<dbReference type="Gene3D" id="3.30.930.10">
    <property type="entry name" value="Bira Bifunctional Protein, Domain 2"/>
    <property type="match status" value="1"/>
</dbReference>
<dbReference type="Gene3D" id="3.30.1360.30">
    <property type="entry name" value="GAD-like domain"/>
    <property type="match status" value="1"/>
</dbReference>
<dbReference type="Gene3D" id="2.40.50.140">
    <property type="entry name" value="Nucleic acid-binding proteins"/>
    <property type="match status" value="1"/>
</dbReference>
<dbReference type="HAMAP" id="MF_00044">
    <property type="entry name" value="Asp_tRNA_synth_type1"/>
    <property type="match status" value="1"/>
</dbReference>
<dbReference type="InterPro" id="IPR004364">
    <property type="entry name" value="Aa-tRNA-synt_II"/>
</dbReference>
<dbReference type="InterPro" id="IPR006195">
    <property type="entry name" value="aa-tRNA-synth_II"/>
</dbReference>
<dbReference type="InterPro" id="IPR045864">
    <property type="entry name" value="aa-tRNA-synth_II/BPL/LPL"/>
</dbReference>
<dbReference type="InterPro" id="IPR004524">
    <property type="entry name" value="Asp-tRNA-ligase_1"/>
</dbReference>
<dbReference type="InterPro" id="IPR047089">
    <property type="entry name" value="Asp-tRNA-ligase_1_N"/>
</dbReference>
<dbReference type="InterPro" id="IPR002312">
    <property type="entry name" value="Asp/Asn-tRNA-synth_IIb"/>
</dbReference>
<dbReference type="InterPro" id="IPR047090">
    <property type="entry name" value="AspRS_core"/>
</dbReference>
<dbReference type="InterPro" id="IPR004115">
    <property type="entry name" value="GAD-like_sf"/>
</dbReference>
<dbReference type="InterPro" id="IPR029351">
    <property type="entry name" value="GAD_dom"/>
</dbReference>
<dbReference type="InterPro" id="IPR012340">
    <property type="entry name" value="NA-bd_OB-fold"/>
</dbReference>
<dbReference type="InterPro" id="IPR004365">
    <property type="entry name" value="NA-bd_OB_tRNA"/>
</dbReference>
<dbReference type="NCBIfam" id="TIGR00459">
    <property type="entry name" value="aspS_bact"/>
    <property type="match status" value="1"/>
</dbReference>
<dbReference type="NCBIfam" id="NF001750">
    <property type="entry name" value="PRK00476.1"/>
    <property type="match status" value="1"/>
</dbReference>
<dbReference type="PANTHER" id="PTHR22594:SF5">
    <property type="entry name" value="ASPARTATE--TRNA LIGASE, MITOCHONDRIAL"/>
    <property type="match status" value="1"/>
</dbReference>
<dbReference type="PANTHER" id="PTHR22594">
    <property type="entry name" value="ASPARTYL/LYSYL-TRNA SYNTHETASE"/>
    <property type="match status" value="1"/>
</dbReference>
<dbReference type="Pfam" id="PF02938">
    <property type="entry name" value="GAD"/>
    <property type="match status" value="1"/>
</dbReference>
<dbReference type="Pfam" id="PF00152">
    <property type="entry name" value="tRNA-synt_2"/>
    <property type="match status" value="1"/>
</dbReference>
<dbReference type="Pfam" id="PF01336">
    <property type="entry name" value="tRNA_anti-codon"/>
    <property type="match status" value="1"/>
</dbReference>
<dbReference type="PRINTS" id="PR01042">
    <property type="entry name" value="TRNASYNTHASP"/>
</dbReference>
<dbReference type="SUPFAM" id="SSF55681">
    <property type="entry name" value="Class II aaRS and biotin synthetases"/>
    <property type="match status" value="1"/>
</dbReference>
<dbReference type="SUPFAM" id="SSF55261">
    <property type="entry name" value="GAD domain-like"/>
    <property type="match status" value="1"/>
</dbReference>
<dbReference type="SUPFAM" id="SSF50249">
    <property type="entry name" value="Nucleic acid-binding proteins"/>
    <property type="match status" value="1"/>
</dbReference>
<dbReference type="PROSITE" id="PS50862">
    <property type="entry name" value="AA_TRNA_LIGASE_II"/>
    <property type="match status" value="1"/>
</dbReference>
<gene>
    <name evidence="1" type="primary">aspS</name>
    <name type="ordered locus">LJ_1391</name>
</gene>
<name>SYD_LACJO</name>